<protein>
    <recommendedName>
        <fullName evidence="1">Large ribosomal subunit protein bL34</fullName>
    </recommendedName>
    <alternativeName>
        <fullName evidence="3">50S ribosomal protein L34</fullName>
    </alternativeName>
</protein>
<reference key="1">
    <citation type="journal article" date="2008" name="J. Bacteriol.">
        <title>The complete genome sequence of Actinobacillus pleuropneumoniae L20 (serotype 5b).</title>
        <authorList>
            <person name="Foote S.J."/>
            <person name="Bosse J.T."/>
            <person name="Bouevitch A.B."/>
            <person name="Langford P.R."/>
            <person name="Young N.M."/>
            <person name="Nash J.H.E."/>
        </authorList>
    </citation>
    <scope>NUCLEOTIDE SEQUENCE [LARGE SCALE GENOMIC DNA]</scope>
    <source>
        <strain>L20</strain>
    </source>
</reference>
<sequence length="44" mass="5082">MKRTFQPSVLKRARTHGFRARMATKNGRQVLARRRAKGRKSLSA</sequence>
<comment type="similarity">
    <text evidence="1">Belongs to the bacterial ribosomal protein bL34 family.</text>
</comment>
<accession>A3N3N0</accession>
<evidence type="ECO:0000255" key="1">
    <source>
        <dbReference type="HAMAP-Rule" id="MF_00391"/>
    </source>
</evidence>
<evidence type="ECO:0000256" key="2">
    <source>
        <dbReference type="SAM" id="MobiDB-lite"/>
    </source>
</evidence>
<evidence type="ECO:0000305" key="3"/>
<proteinExistence type="inferred from homology"/>
<name>RL34_ACTP2</name>
<organism>
    <name type="scientific">Actinobacillus pleuropneumoniae serotype 5b (strain L20)</name>
    <dbReference type="NCBI Taxonomy" id="416269"/>
    <lineage>
        <taxon>Bacteria</taxon>
        <taxon>Pseudomonadati</taxon>
        <taxon>Pseudomonadota</taxon>
        <taxon>Gammaproteobacteria</taxon>
        <taxon>Pasteurellales</taxon>
        <taxon>Pasteurellaceae</taxon>
        <taxon>Actinobacillus</taxon>
    </lineage>
</organism>
<dbReference type="EMBL" id="CP000569">
    <property type="protein sequence ID" value="ABN75016.1"/>
    <property type="molecule type" value="Genomic_DNA"/>
</dbReference>
<dbReference type="RefSeq" id="WP_005599701.1">
    <property type="nucleotide sequence ID" value="NC_009053.1"/>
</dbReference>
<dbReference type="SMR" id="A3N3N0"/>
<dbReference type="STRING" id="416269.APL_1938"/>
<dbReference type="EnsemblBacteria" id="ABN75016">
    <property type="protein sequence ID" value="ABN75016"/>
    <property type="gene ID" value="APL_1938"/>
</dbReference>
<dbReference type="GeneID" id="92743426"/>
<dbReference type="KEGG" id="apl:APL_1938"/>
<dbReference type="eggNOG" id="COG0230">
    <property type="taxonomic scope" value="Bacteria"/>
</dbReference>
<dbReference type="HOGENOM" id="CLU_129938_2_0_6"/>
<dbReference type="Proteomes" id="UP000001432">
    <property type="component" value="Chromosome"/>
</dbReference>
<dbReference type="GO" id="GO:1990904">
    <property type="term" value="C:ribonucleoprotein complex"/>
    <property type="evidence" value="ECO:0007669"/>
    <property type="project" value="UniProtKB-KW"/>
</dbReference>
<dbReference type="GO" id="GO:0005840">
    <property type="term" value="C:ribosome"/>
    <property type="evidence" value="ECO:0007669"/>
    <property type="project" value="UniProtKB-KW"/>
</dbReference>
<dbReference type="GO" id="GO:0003735">
    <property type="term" value="F:structural constituent of ribosome"/>
    <property type="evidence" value="ECO:0007669"/>
    <property type="project" value="InterPro"/>
</dbReference>
<dbReference type="GO" id="GO:0006412">
    <property type="term" value="P:translation"/>
    <property type="evidence" value="ECO:0007669"/>
    <property type="project" value="UniProtKB-UniRule"/>
</dbReference>
<dbReference type="FunFam" id="1.10.287.3980:FF:000001">
    <property type="entry name" value="Mitochondrial ribosomal protein L34"/>
    <property type="match status" value="1"/>
</dbReference>
<dbReference type="Gene3D" id="1.10.287.3980">
    <property type="match status" value="1"/>
</dbReference>
<dbReference type="HAMAP" id="MF_00391">
    <property type="entry name" value="Ribosomal_bL34"/>
    <property type="match status" value="1"/>
</dbReference>
<dbReference type="InterPro" id="IPR000271">
    <property type="entry name" value="Ribosomal_bL34"/>
</dbReference>
<dbReference type="InterPro" id="IPR020939">
    <property type="entry name" value="Ribosomal_bL34_CS"/>
</dbReference>
<dbReference type="NCBIfam" id="TIGR01030">
    <property type="entry name" value="rpmH_bact"/>
    <property type="match status" value="1"/>
</dbReference>
<dbReference type="PANTHER" id="PTHR14503:SF4">
    <property type="entry name" value="LARGE RIBOSOMAL SUBUNIT PROTEIN BL34M"/>
    <property type="match status" value="1"/>
</dbReference>
<dbReference type="PANTHER" id="PTHR14503">
    <property type="entry name" value="MITOCHONDRIAL RIBOSOMAL PROTEIN 34 FAMILY MEMBER"/>
    <property type="match status" value="1"/>
</dbReference>
<dbReference type="Pfam" id="PF00468">
    <property type="entry name" value="Ribosomal_L34"/>
    <property type="match status" value="1"/>
</dbReference>
<dbReference type="PROSITE" id="PS00784">
    <property type="entry name" value="RIBOSOMAL_L34"/>
    <property type="match status" value="1"/>
</dbReference>
<feature type="chain" id="PRO_1000013265" description="Large ribosomal subunit protein bL34">
    <location>
        <begin position="1"/>
        <end position="44"/>
    </location>
</feature>
<feature type="region of interest" description="Disordered" evidence="2">
    <location>
        <begin position="23"/>
        <end position="44"/>
    </location>
</feature>
<feature type="compositionally biased region" description="Basic residues" evidence="2">
    <location>
        <begin position="31"/>
        <end position="44"/>
    </location>
</feature>
<gene>
    <name evidence="1" type="primary">rpmH</name>
    <name type="ordered locus">APL_1938</name>
</gene>
<keyword id="KW-1185">Reference proteome</keyword>
<keyword id="KW-0687">Ribonucleoprotein</keyword>
<keyword id="KW-0689">Ribosomal protein</keyword>